<gene>
    <name evidence="1" type="primary">truB</name>
    <name type="ordered locus">SPD_1070</name>
</gene>
<name>TRUB_STRP2</name>
<feature type="chain" id="PRO_1000084696" description="tRNA pseudouridine synthase B">
    <location>
        <begin position="1"/>
        <end position="292"/>
    </location>
</feature>
<feature type="active site" description="Nucleophile" evidence="1">
    <location>
        <position position="38"/>
    </location>
</feature>
<protein>
    <recommendedName>
        <fullName evidence="1">tRNA pseudouridine synthase B</fullName>
        <ecNumber evidence="1">5.4.99.25</ecNumber>
    </recommendedName>
    <alternativeName>
        <fullName evidence="1">tRNA pseudouridine(55) synthase</fullName>
        <shortName evidence="1">Psi55 synthase</shortName>
    </alternativeName>
    <alternativeName>
        <fullName evidence="1">tRNA pseudouridylate synthase</fullName>
    </alternativeName>
    <alternativeName>
        <fullName evidence="1">tRNA-uridine isomerase</fullName>
    </alternativeName>
</protein>
<keyword id="KW-0413">Isomerase</keyword>
<keyword id="KW-1185">Reference proteome</keyword>
<keyword id="KW-0819">tRNA processing</keyword>
<accession>Q04KA7</accession>
<sequence length="292" mass="32256">MNGIINLKKEAGMTSHDAVFKLRKILGTKKIGHGGTLDPDVVGVLPIAVGKATRMVEFMQDEGKIYEGEIILGYSTTTEDASGEVVAETPVLSSLDEKLVDEAIASLTGPITQIPPMYSAVKVNGRKLYEYARAGQEVERPERQVIIYQFERTSPISYDGQLARFTFRVKCSKGTYIRTLSVDLGEKLGYAAHMSHLTRTSAAGLQLEDALALEEIAEKVEAGQLDFLHPLEIGTGDLVKVFLTPEEATEVRFGRFIELDQTDKELAAFEDDKLLAILEKRGNLYKPRKVFS</sequence>
<organism>
    <name type="scientific">Streptococcus pneumoniae serotype 2 (strain D39 / NCTC 7466)</name>
    <dbReference type="NCBI Taxonomy" id="373153"/>
    <lineage>
        <taxon>Bacteria</taxon>
        <taxon>Bacillati</taxon>
        <taxon>Bacillota</taxon>
        <taxon>Bacilli</taxon>
        <taxon>Lactobacillales</taxon>
        <taxon>Streptococcaceae</taxon>
        <taxon>Streptococcus</taxon>
    </lineage>
</organism>
<comment type="function">
    <text evidence="1">Responsible for synthesis of pseudouridine from uracil-55 in the psi GC loop of transfer RNAs.</text>
</comment>
<comment type="catalytic activity">
    <reaction evidence="1">
        <text>uridine(55) in tRNA = pseudouridine(55) in tRNA</text>
        <dbReference type="Rhea" id="RHEA:42532"/>
        <dbReference type="Rhea" id="RHEA-COMP:10101"/>
        <dbReference type="Rhea" id="RHEA-COMP:10102"/>
        <dbReference type="ChEBI" id="CHEBI:65314"/>
        <dbReference type="ChEBI" id="CHEBI:65315"/>
        <dbReference type="EC" id="5.4.99.25"/>
    </reaction>
</comment>
<comment type="similarity">
    <text evidence="1">Belongs to the pseudouridine synthase TruB family. Type 1 subfamily.</text>
</comment>
<proteinExistence type="inferred from homology"/>
<evidence type="ECO:0000255" key="1">
    <source>
        <dbReference type="HAMAP-Rule" id="MF_01080"/>
    </source>
</evidence>
<dbReference type="EC" id="5.4.99.25" evidence="1"/>
<dbReference type="EMBL" id="CP000410">
    <property type="protein sequence ID" value="ABJ54024.1"/>
    <property type="molecule type" value="Genomic_DNA"/>
</dbReference>
<dbReference type="RefSeq" id="WP_001013236.1">
    <property type="nucleotide sequence ID" value="NZ_JAMLJR010000006.1"/>
</dbReference>
<dbReference type="SMR" id="Q04KA7"/>
<dbReference type="PaxDb" id="373153-SPD_1070"/>
<dbReference type="KEGG" id="spd:SPD_1070"/>
<dbReference type="eggNOG" id="COG0130">
    <property type="taxonomic scope" value="Bacteria"/>
</dbReference>
<dbReference type="HOGENOM" id="CLU_032087_0_1_9"/>
<dbReference type="BioCyc" id="SPNE373153:G1G6V-1161-MONOMER"/>
<dbReference type="Proteomes" id="UP000001452">
    <property type="component" value="Chromosome"/>
</dbReference>
<dbReference type="GO" id="GO:0003723">
    <property type="term" value="F:RNA binding"/>
    <property type="evidence" value="ECO:0007669"/>
    <property type="project" value="InterPro"/>
</dbReference>
<dbReference type="GO" id="GO:0160148">
    <property type="term" value="F:tRNA pseudouridine(55) synthase activity"/>
    <property type="evidence" value="ECO:0007669"/>
    <property type="project" value="UniProtKB-EC"/>
</dbReference>
<dbReference type="GO" id="GO:1990481">
    <property type="term" value="P:mRNA pseudouridine synthesis"/>
    <property type="evidence" value="ECO:0007669"/>
    <property type="project" value="TreeGrafter"/>
</dbReference>
<dbReference type="GO" id="GO:0031119">
    <property type="term" value="P:tRNA pseudouridine synthesis"/>
    <property type="evidence" value="ECO:0007669"/>
    <property type="project" value="UniProtKB-UniRule"/>
</dbReference>
<dbReference type="CDD" id="cd02573">
    <property type="entry name" value="PseudoU_synth_EcTruB"/>
    <property type="match status" value="1"/>
</dbReference>
<dbReference type="FunFam" id="3.30.2350.10:FF:000011">
    <property type="entry name" value="tRNA pseudouridine synthase B"/>
    <property type="match status" value="1"/>
</dbReference>
<dbReference type="Gene3D" id="3.30.2350.10">
    <property type="entry name" value="Pseudouridine synthase"/>
    <property type="match status" value="1"/>
</dbReference>
<dbReference type="HAMAP" id="MF_01080">
    <property type="entry name" value="TruB_bact"/>
    <property type="match status" value="1"/>
</dbReference>
<dbReference type="InterPro" id="IPR020103">
    <property type="entry name" value="PsdUridine_synth_cat_dom_sf"/>
</dbReference>
<dbReference type="InterPro" id="IPR002501">
    <property type="entry name" value="PsdUridine_synth_N"/>
</dbReference>
<dbReference type="InterPro" id="IPR014780">
    <property type="entry name" value="tRNA_psdUridine_synth_TruB"/>
</dbReference>
<dbReference type="InterPro" id="IPR032819">
    <property type="entry name" value="TruB_C"/>
</dbReference>
<dbReference type="NCBIfam" id="TIGR00431">
    <property type="entry name" value="TruB"/>
    <property type="match status" value="1"/>
</dbReference>
<dbReference type="PANTHER" id="PTHR13767:SF2">
    <property type="entry name" value="PSEUDOURIDYLATE SYNTHASE TRUB1"/>
    <property type="match status" value="1"/>
</dbReference>
<dbReference type="PANTHER" id="PTHR13767">
    <property type="entry name" value="TRNA-PSEUDOURIDINE SYNTHASE"/>
    <property type="match status" value="1"/>
</dbReference>
<dbReference type="Pfam" id="PF16198">
    <property type="entry name" value="TruB_C_2"/>
    <property type="match status" value="1"/>
</dbReference>
<dbReference type="Pfam" id="PF01509">
    <property type="entry name" value="TruB_N"/>
    <property type="match status" value="1"/>
</dbReference>
<dbReference type="SUPFAM" id="SSF55120">
    <property type="entry name" value="Pseudouridine synthase"/>
    <property type="match status" value="1"/>
</dbReference>
<reference key="1">
    <citation type="journal article" date="2007" name="J. Bacteriol.">
        <title>Genome sequence of Avery's virulent serotype 2 strain D39 of Streptococcus pneumoniae and comparison with that of unencapsulated laboratory strain R6.</title>
        <authorList>
            <person name="Lanie J.A."/>
            <person name="Ng W.-L."/>
            <person name="Kazmierczak K.M."/>
            <person name="Andrzejewski T.M."/>
            <person name="Davidsen T.M."/>
            <person name="Wayne K.J."/>
            <person name="Tettelin H."/>
            <person name="Glass J.I."/>
            <person name="Winkler M.E."/>
        </authorList>
    </citation>
    <scope>NUCLEOTIDE SEQUENCE [LARGE SCALE GENOMIC DNA]</scope>
    <source>
        <strain>D39 / NCTC 7466</strain>
    </source>
</reference>